<comment type="function">
    <text evidence="1">Plays an essential role in the initiation and regulation of chromosomal replication. ATP-DnaA binds to the origin of replication (oriC) to initiate formation of the DNA replication initiation complex once per cell cycle. Binds the DnaA box (a 9 base pair repeat at the origin) and separates the double-stranded (ds)DNA. Forms a right-handed helical filament on oriC DNA; dsDNA binds to the exterior of the filament while single-stranded (ss)DNA is stabiized in the filament's interior. The ATP-DnaA-oriC complex binds and stabilizes one strand of the AT-rich DNA unwinding element (DUE), permitting loading of DNA polymerase. After initiation quickly degrades to an ADP-DnaA complex that is not apt for DNA replication. Binds acidic phospholipids.</text>
</comment>
<comment type="subunit">
    <text evidence="1">Oligomerizes as a right-handed, spiral filament on DNA at oriC.</text>
</comment>
<comment type="subcellular location">
    <subcellularLocation>
        <location evidence="1">Cytoplasm</location>
    </subcellularLocation>
</comment>
<comment type="domain">
    <text evidence="1">Domain I is involved in oligomerization and binding regulators, domain II is flexibile and of varying length in different bacteria, domain III forms the AAA+ region, while domain IV binds dsDNA.</text>
</comment>
<comment type="similarity">
    <text evidence="1">Belongs to the DnaA family.</text>
</comment>
<sequence>MNLTKVWNTTLGSLQVQLPRHEYNTWVRGANLLDIDNGVAIIRAPNAFIKEGLESRYLTTLREQLGSVVGFPVDVRIVLATSESERIDGASINGRHAARDTRKSDHHAPLSGGYGNGISHPLERASVHQLELHRAVRSSMLNPRYTFDRFIIGPSNRLANAACMAVAEHPAQAYNPLFLYGGVGLGKTHLLHAIGNFVLDRDPEVNVLYVSSETFTNDLINSIRRQQTEEFRIRYRNIDILLIDDIQFIAGKEQTQEEFFHTFNTLHSAGKQIIISSDRSPKAILTLEERLRSRFEWGLIVDVQMPDLETRTAILRAKAEQSPVPVPQPVIDFLAQRIQSHIRELEGCLNRVTAYAQMYNIPVTIEVATAALSELLDTNRRKRVTPEAILREVAAFYSVDLRSLQGRGRSRNIVTPRHVAMYLLREETDSSLMEIGQLLGGRDHTTVMYGCDKIAEEINTDARLRQEVAAIRERLMNSAV</sequence>
<keyword id="KW-0067">ATP-binding</keyword>
<keyword id="KW-0963">Cytoplasm</keyword>
<keyword id="KW-0235">DNA replication</keyword>
<keyword id="KW-0238">DNA-binding</keyword>
<keyword id="KW-0446">Lipid-binding</keyword>
<keyword id="KW-0547">Nucleotide-binding</keyword>
<keyword id="KW-1185">Reference proteome</keyword>
<organism>
    <name type="scientific">Roseiflexus castenholzii (strain DSM 13941 / HLO8)</name>
    <dbReference type="NCBI Taxonomy" id="383372"/>
    <lineage>
        <taxon>Bacteria</taxon>
        <taxon>Bacillati</taxon>
        <taxon>Chloroflexota</taxon>
        <taxon>Chloroflexia</taxon>
        <taxon>Chloroflexales</taxon>
        <taxon>Roseiflexineae</taxon>
        <taxon>Roseiflexaceae</taxon>
        <taxon>Roseiflexus</taxon>
    </lineage>
</organism>
<proteinExistence type="inferred from homology"/>
<name>DNAA_ROSCS</name>
<gene>
    <name evidence="1" type="primary">dnaA</name>
    <name type="ordered locus">Rcas_0001</name>
</gene>
<dbReference type="EMBL" id="CP000804">
    <property type="protein sequence ID" value="ABU56140.1"/>
    <property type="molecule type" value="Genomic_DNA"/>
</dbReference>
<dbReference type="RefSeq" id="WP_011997546.1">
    <property type="nucleotide sequence ID" value="NC_009767.1"/>
</dbReference>
<dbReference type="SMR" id="A7NFB8"/>
<dbReference type="STRING" id="383372.Rcas_0001"/>
<dbReference type="KEGG" id="rca:Rcas_0001"/>
<dbReference type="eggNOG" id="COG0593">
    <property type="taxonomic scope" value="Bacteria"/>
</dbReference>
<dbReference type="HOGENOM" id="CLU_026910_3_1_0"/>
<dbReference type="OrthoDB" id="9807019at2"/>
<dbReference type="Proteomes" id="UP000000263">
    <property type="component" value="Chromosome"/>
</dbReference>
<dbReference type="GO" id="GO:0005737">
    <property type="term" value="C:cytoplasm"/>
    <property type="evidence" value="ECO:0007669"/>
    <property type="project" value="UniProtKB-SubCell"/>
</dbReference>
<dbReference type="GO" id="GO:0005886">
    <property type="term" value="C:plasma membrane"/>
    <property type="evidence" value="ECO:0007669"/>
    <property type="project" value="TreeGrafter"/>
</dbReference>
<dbReference type="GO" id="GO:0005524">
    <property type="term" value="F:ATP binding"/>
    <property type="evidence" value="ECO:0007669"/>
    <property type="project" value="UniProtKB-UniRule"/>
</dbReference>
<dbReference type="GO" id="GO:0016887">
    <property type="term" value="F:ATP hydrolysis activity"/>
    <property type="evidence" value="ECO:0007669"/>
    <property type="project" value="InterPro"/>
</dbReference>
<dbReference type="GO" id="GO:0003688">
    <property type="term" value="F:DNA replication origin binding"/>
    <property type="evidence" value="ECO:0007669"/>
    <property type="project" value="UniProtKB-UniRule"/>
</dbReference>
<dbReference type="GO" id="GO:0008289">
    <property type="term" value="F:lipid binding"/>
    <property type="evidence" value="ECO:0007669"/>
    <property type="project" value="UniProtKB-KW"/>
</dbReference>
<dbReference type="GO" id="GO:0006270">
    <property type="term" value="P:DNA replication initiation"/>
    <property type="evidence" value="ECO:0007669"/>
    <property type="project" value="UniProtKB-UniRule"/>
</dbReference>
<dbReference type="GO" id="GO:0006275">
    <property type="term" value="P:regulation of DNA replication"/>
    <property type="evidence" value="ECO:0007669"/>
    <property type="project" value="UniProtKB-UniRule"/>
</dbReference>
<dbReference type="CDD" id="cd00009">
    <property type="entry name" value="AAA"/>
    <property type="match status" value="1"/>
</dbReference>
<dbReference type="CDD" id="cd06571">
    <property type="entry name" value="Bac_DnaA_C"/>
    <property type="match status" value="1"/>
</dbReference>
<dbReference type="FunFam" id="3.40.50.300:FF:000150">
    <property type="entry name" value="Chromosomal replication initiator protein DnaA"/>
    <property type="match status" value="1"/>
</dbReference>
<dbReference type="Gene3D" id="1.10.1750.10">
    <property type="match status" value="1"/>
</dbReference>
<dbReference type="Gene3D" id="1.10.8.60">
    <property type="match status" value="1"/>
</dbReference>
<dbReference type="Gene3D" id="3.30.300.180">
    <property type="match status" value="1"/>
</dbReference>
<dbReference type="Gene3D" id="3.40.50.300">
    <property type="entry name" value="P-loop containing nucleotide triphosphate hydrolases"/>
    <property type="match status" value="1"/>
</dbReference>
<dbReference type="HAMAP" id="MF_00377">
    <property type="entry name" value="DnaA_bact"/>
    <property type="match status" value="1"/>
</dbReference>
<dbReference type="InterPro" id="IPR003593">
    <property type="entry name" value="AAA+_ATPase"/>
</dbReference>
<dbReference type="InterPro" id="IPR001957">
    <property type="entry name" value="Chromosome_initiator_DnaA"/>
</dbReference>
<dbReference type="InterPro" id="IPR020591">
    <property type="entry name" value="Chromosome_initiator_DnaA-like"/>
</dbReference>
<dbReference type="InterPro" id="IPR018312">
    <property type="entry name" value="Chromosome_initiator_DnaA_CS"/>
</dbReference>
<dbReference type="InterPro" id="IPR013159">
    <property type="entry name" value="DnaA_C"/>
</dbReference>
<dbReference type="InterPro" id="IPR013317">
    <property type="entry name" value="DnaA_dom"/>
</dbReference>
<dbReference type="InterPro" id="IPR024633">
    <property type="entry name" value="DnaA_N_dom"/>
</dbReference>
<dbReference type="InterPro" id="IPR038454">
    <property type="entry name" value="DnaA_N_sf"/>
</dbReference>
<dbReference type="InterPro" id="IPR027417">
    <property type="entry name" value="P-loop_NTPase"/>
</dbReference>
<dbReference type="InterPro" id="IPR010921">
    <property type="entry name" value="Trp_repressor/repl_initiator"/>
</dbReference>
<dbReference type="NCBIfam" id="TIGR00362">
    <property type="entry name" value="DnaA"/>
    <property type="match status" value="1"/>
</dbReference>
<dbReference type="PANTHER" id="PTHR30050">
    <property type="entry name" value="CHROMOSOMAL REPLICATION INITIATOR PROTEIN DNAA"/>
    <property type="match status" value="1"/>
</dbReference>
<dbReference type="PANTHER" id="PTHR30050:SF2">
    <property type="entry name" value="CHROMOSOMAL REPLICATION INITIATOR PROTEIN DNAA"/>
    <property type="match status" value="1"/>
</dbReference>
<dbReference type="Pfam" id="PF00308">
    <property type="entry name" value="Bac_DnaA"/>
    <property type="match status" value="1"/>
</dbReference>
<dbReference type="Pfam" id="PF08299">
    <property type="entry name" value="Bac_DnaA_C"/>
    <property type="match status" value="1"/>
</dbReference>
<dbReference type="Pfam" id="PF11638">
    <property type="entry name" value="DnaA_N"/>
    <property type="match status" value="1"/>
</dbReference>
<dbReference type="PRINTS" id="PR00051">
    <property type="entry name" value="DNAA"/>
</dbReference>
<dbReference type="SMART" id="SM00382">
    <property type="entry name" value="AAA"/>
    <property type="match status" value="1"/>
</dbReference>
<dbReference type="SMART" id="SM00760">
    <property type="entry name" value="Bac_DnaA_C"/>
    <property type="match status" value="1"/>
</dbReference>
<dbReference type="SUPFAM" id="SSF52540">
    <property type="entry name" value="P-loop containing nucleoside triphosphate hydrolases"/>
    <property type="match status" value="1"/>
</dbReference>
<dbReference type="SUPFAM" id="SSF48295">
    <property type="entry name" value="TrpR-like"/>
    <property type="match status" value="1"/>
</dbReference>
<dbReference type="PROSITE" id="PS01008">
    <property type="entry name" value="DNAA"/>
    <property type="match status" value="1"/>
</dbReference>
<reference key="1">
    <citation type="submission" date="2007-08" db="EMBL/GenBank/DDBJ databases">
        <title>Complete sequence of Roseiflexus castenholzii DSM 13941.</title>
        <authorList>
            <consortium name="US DOE Joint Genome Institute"/>
            <person name="Copeland A."/>
            <person name="Lucas S."/>
            <person name="Lapidus A."/>
            <person name="Barry K."/>
            <person name="Glavina del Rio T."/>
            <person name="Dalin E."/>
            <person name="Tice H."/>
            <person name="Pitluck S."/>
            <person name="Thompson L.S."/>
            <person name="Brettin T."/>
            <person name="Bruce D."/>
            <person name="Detter J.C."/>
            <person name="Han C."/>
            <person name="Tapia R."/>
            <person name="Schmutz J."/>
            <person name="Larimer F."/>
            <person name="Land M."/>
            <person name="Hauser L."/>
            <person name="Kyrpides N."/>
            <person name="Mikhailova N."/>
            <person name="Bryant D.A."/>
            <person name="Hanada S."/>
            <person name="Tsukatani Y."/>
            <person name="Richardson P."/>
        </authorList>
    </citation>
    <scope>NUCLEOTIDE SEQUENCE [LARGE SCALE GENOMIC DNA]</scope>
    <source>
        <strain>DSM 13941 / HLO8</strain>
    </source>
</reference>
<protein>
    <recommendedName>
        <fullName evidence="1">Chromosomal replication initiator protein DnaA</fullName>
    </recommendedName>
</protein>
<feature type="chain" id="PRO_1000079959" description="Chromosomal replication initiator protein DnaA">
    <location>
        <begin position="1"/>
        <end position="480"/>
    </location>
</feature>
<feature type="region of interest" description="Domain I, interacts with DnaA modulators" evidence="1">
    <location>
        <begin position="1"/>
        <end position="71"/>
    </location>
</feature>
<feature type="region of interest" description="Domain II" evidence="1">
    <location>
        <begin position="71"/>
        <end position="139"/>
    </location>
</feature>
<feature type="region of interest" description="Disordered" evidence="2">
    <location>
        <begin position="91"/>
        <end position="115"/>
    </location>
</feature>
<feature type="region of interest" description="Domain III, AAA+ region" evidence="1">
    <location>
        <begin position="140"/>
        <end position="356"/>
    </location>
</feature>
<feature type="region of interest" description="Domain IV, binds dsDNA" evidence="1">
    <location>
        <begin position="357"/>
        <end position="480"/>
    </location>
</feature>
<feature type="compositionally biased region" description="Basic and acidic residues" evidence="2">
    <location>
        <begin position="97"/>
        <end position="108"/>
    </location>
</feature>
<feature type="binding site" evidence="1">
    <location>
        <position position="184"/>
    </location>
    <ligand>
        <name>ATP</name>
        <dbReference type="ChEBI" id="CHEBI:30616"/>
    </ligand>
</feature>
<feature type="binding site" evidence="1">
    <location>
        <position position="186"/>
    </location>
    <ligand>
        <name>ATP</name>
        <dbReference type="ChEBI" id="CHEBI:30616"/>
    </ligand>
</feature>
<feature type="binding site" evidence="1">
    <location>
        <position position="187"/>
    </location>
    <ligand>
        <name>ATP</name>
        <dbReference type="ChEBI" id="CHEBI:30616"/>
    </ligand>
</feature>
<feature type="binding site" evidence="1">
    <location>
        <position position="188"/>
    </location>
    <ligand>
        <name>ATP</name>
        <dbReference type="ChEBI" id="CHEBI:30616"/>
    </ligand>
</feature>
<accession>A7NFB8</accession>
<evidence type="ECO:0000255" key="1">
    <source>
        <dbReference type="HAMAP-Rule" id="MF_00377"/>
    </source>
</evidence>
<evidence type="ECO:0000256" key="2">
    <source>
        <dbReference type="SAM" id="MobiDB-lite"/>
    </source>
</evidence>